<comment type="catalytic activity">
    <reaction evidence="1">
        <text>tRNA(His) + L-histidine + ATP = L-histidyl-tRNA(His) + AMP + diphosphate + H(+)</text>
        <dbReference type="Rhea" id="RHEA:17313"/>
        <dbReference type="Rhea" id="RHEA-COMP:9665"/>
        <dbReference type="Rhea" id="RHEA-COMP:9689"/>
        <dbReference type="ChEBI" id="CHEBI:15378"/>
        <dbReference type="ChEBI" id="CHEBI:30616"/>
        <dbReference type="ChEBI" id="CHEBI:33019"/>
        <dbReference type="ChEBI" id="CHEBI:57595"/>
        <dbReference type="ChEBI" id="CHEBI:78442"/>
        <dbReference type="ChEBI" id="CHEBI:78527"/>
        <dbReference type="ChEBI" id="CHEBI:456215"/>
        <dbReference type="EC" id="6.1.1.21"/>
    </reaction>
</comment>
<comment type="subunit">
    <text evidence="1">Homodimer.</text>
</comment>
<comment type="subcellular location">
    <subcellularLocation>
        <location evidence="1">Cytoplasm</location>
    </subcellularLocation>
</comment>
<comment type="similarity">
    <text evidence="1">Belongs to the class-II aminoacyl-tRNA synthetase family.</text>
</comment>
<sequence length="433" mass="50580">MIKYRNSSIHIQSVRGMHDCLPKDVIQWQYIEDVLKTILNGYGYNEIRFPIIECTDLFKRSIGEVTDVVEKEMYTFIDQHGNDLTLRPEGTSGCVRAGIENSLFYHQEPRLWYMGPMFRRERPQKGRYRQFHQFSAEAFGCVGPDIDVELILITNRCWKELGISNYLTLELNSIGLLSSRMIYRKKLISFLEKNKHNLDDSSKRRLYSNPMRILDTKNVKIKELLAHAPVLSDYLDDCSKNHFLNLCRLLDIANVTYIVNPYLVRGLDYYNRTVFEWVTDKLGVKKTICAGGRYDDLIKQLGGGSIPAVGFAIGLERVVLLMKLIKSSIINTRNVYIDVYLIRLGTYYQEYSIKLSEHIREKLPFLRLMVDCGGGNFKQQIDRAEKNNSRFVIVVDDKNFFEQTIILKELQSKKQEILKYDEIILKLRKIYNM</sequence>
<evidence type="ECO:0000255" key="1">
    <source>
        <dbReference type="HAMAP-Rule" id="MF_00127"/>
    </source>
</evidence>
<proteinExistence type="inferred from homology"/>
<accession>Q7VRR8</accession>
<organism>
    <name type="scientific">Blochmanniella floridana</name>
    <dbReference type="NCBI Taxonomy" id="203907"/>
    <lineage>
        <taxon>Bacteria</taxon>
        <taxon>Pseudomonadati</taxon>
        <taxon>Pseudomonadota</taxon>
        <taxon>Gammaproteobacteria</taxon>
        <taxon>Enterobacterales</taxon>
        <taxon>Enterobacteriaceae</taxon>
        <taxon>ant endosymbionts</taxon>
        <taxon>Candidatus Blochmanniella</taxon>
    </lineage>
</organism>
<keyword id="KW-0030">Aminoacyl-tRNA synthetase</keyword>
<keyword id="KW-0067">ATP-binding</keyword>
<keyword id="KW-0963">Cytoplasm</keyword>
<keyword id="KW-0436">Ligase</keyword>
<keyword id="KW-0547">Nucleotide-binding</keyword>
<keyword id="KW-0648">Protein biosynthesis</keyword>
<keyword id="KW-1185">Reference proteome</keyword>
<protein>
    <recommendedName>
        <fullName evidence="1">Histidine--tRNA ligase</fullName>
        <ecNumber evidence="1">6.1.1.21</ecNumber>
    </recommendedName>
    <alternativeName>
        <fullName evidence="1">Histidyl-tRNA synthetase</fullName>
        <shortName evidence="1">HisRS</shortName>
    </alternativeName>
</protein>
<name>SYH_BLOFL</name>
<feature type="chain" id="PRO_0000136115" description="Histidine--tRNA ligase">
    <location>
        <begin position="1"/>
        <end position="433"/>
    </location>
</feature>
<dbReference type="EC" id="6.1.1.21" evidence="1"/>
<dbReference type="EMBL" id="BX248583">
    <property type="protein sequence ID" value="CAD83217.1"/>
    <property type="molecule type" value="Genomic_DNA"/>
</dbReference>
<dbReference type="SMR" id="Q7VRR8"/>
<dbReference type="STRING" id="203907.Bfl531"/>
<dbReference type="KEGG" id="bfl:Bfl531"/>
<dbReference type="eggNOG" id="COG0124">
    <property type="taxonomic scope" value="Bacteria"/>
</dbReference>
<dbReference type="HOGENOM" id="CLU_025113_1_1_6"/>
<dbReference type="OrthoDB" id="9800814at2"/>
<dbReference type="Proteomes" id="UP000002192">
    <property type="component" value="Chromosome"/>
</dbReference>
<dbReference type="GO" id="GO:0005737">
    <property type="term" value="C:cytoplasm"/>
    <property type="evidence" value="ECO:0007669"/>
    <property type="project" value="UniProtKB-SubCell"/>
</dbReference>
<dbReference type="GO" id="GO:0005524">
    <property type="term" value="F:ATP binding"/>
    <property type="evidence" value="ECO:0007669"/>
    <property type="project" value="UniProtKB-UniRule"/>
</dbReference>
<dbReference type="GO" id="GO:0004821">
    <property type="term" value="F:histidine-tRNA ligase activity"/>
    <property type="evidence" value="ECO:0007669"/>
    <property type="project" value="UniProtKB-UniRule"/>
</dbReference>
<dbReference type="GO" id="GO:0006427">
    <property type="term" value="P:histidyl-tRNA aminoacylation"/>
    <property type="evidence" value="ECO:0007669"/>
    <property type="project" value="UniProtKB-UniRule"/>
</dbReference>
<dbReference type="CDD" id="cd00773">
    <property type="entry name" value="HisRS-like_core"/>
    <property type="match status" value="1"/>
</dbReference>
<dbReference type="FunFam" id="3.30.930.10:FF:000005">
    <property type="entry name" value="Histidine--tRNA ligase"/>
    <property type="match status" value="1"/>
</dbReference>
<dbReference type="Gene3D" id="3.40.50.800">
    <property type="entry name" value="Anticodon-binding domain"/>
    <property type="match status" value="1"/>
</dbReference>
<dbReference type="Gene3D" id="3.30.930.10">
    <property type="entry name" value="Bira Bifunctional Protein, Domain 2"/>
    <property type="match status" value="1"/>
</dbReference>
<dbReference type="HAMAP" id="MF_00127">
    <property type="entry name" value="His_tRNA_synth"/>
    <property type="match status" value="1"/>
</dbReference>
<dbReference type="InterPro" id="IPR006195">
    <property type="entry name" value="aa-tRNA-synth_II"/>
</dbReference>
<dbReference type="InterPro" id="IPR045864">
    <property type="entry name" value="aa-tRNA-synth_II/BPL/LPL"/>
</dbReference>
<dbReference type="InterPro" id="IPR004154">
    <property type="entry name" value="Anticodon-bd"/>
</dbReference>
<dbReference type="InterPro" id="IPR036621">
    <property type="entry name" value="Anticodon-bd_dom_sf"/>
</dbReference>
<dbReference type="InterPro" id="IPR015807">
    <property type="entry name" value="His-tRNA-ligase"/>
</dbReference>
<dbReference type="InterPro" id="IPR041715">
    <property type="entry name" value="HisRS-like_core"/>
</dbReference>
<dbReference type="InterPro" id="IPR004516">
    <property type="entry name" value="HisRS/HisZ"/>
</dbReference>
<dbReference type="NCBIfam" id="TIGR00442">
    <property type="entry name" value="hisS"/>
    <property type="match status" value="1"/>
</dbReference>
<dbReference type="PANTHER" id="PTHR43707:SF1">
    <property type="entry name" value="HISTIDINE--TRNA LIGASE, MITOCHONDRIAL-RELATED"/>
    <property type="match status" value="1"/>
</dbReference>
<dbReference type="PANTHER" id="PTHR43707">
    <property type="entry name" value="HISTIDYL-TRNA SYNTHETASE"/>
    <property type="match status" value="1"/>
</dbReference>
<dbReference type="Pfam" id="PF03129">
    <property type="entry name" value="HGTP_anticodon"/>
    <property type="match status" value="1"/>
</dbReference>
<dbReference type="Pfam" id="PF13393">
    <property type="entry name" value="tRNA-synt_His"/>
    <property type="match status" value="1"/>
</dbReference>
<dbReference type="PIRSF" id="PIRSF001549">
    <property type="entry name" value="His-tRNA_synth"/>
    <property type="match status" value="1"/>
</dbReference>
<dbReference type="SUPFAM" id="SSF52954">
    <property type="entry name" value="Class II aaRS ABD-related"/>
    <property type="match status" value="1"/>
</dbReference>
<dbReference type="SUPFAM" id="SSF55681">
    <property type="entry name" value="Class II aaRS and biotin synthetases"/>
    <property type="match status" value="1"/>
</dbReference>
<dbReference type="PROSITE" id="PS50862">
    <property type="entry name" value="AA_TRNA_LIGASE_II"/>
    <property type="match status" value="1"/>
</dbReference>
<gene>
    <name evidence="1" type="primary">hisS</name>
    <name type="ordered locus">Bfl531</name>
</gene>
<reference key="1">
    <citation type="journal article" date="2003" name="Proc. Natl. Acad. Sci. U.S.A.">
        <title>The genome sequence of Blochmannia floridanus: comparative analysis of reduced genomes.</title>
        <authorList>
            <person name="Gil R."/>
            <person name="Silva F.J."/>
            <person name="Zientz E."/>
            <person name="Delmotte F."/>
            <person name="Gonzalez-Candelas F."/>
            <person name="Latorre A."/>
            <person name="Rausell C."/>
            <person name="Kamerbeek J."/>
            <person name="Gadau J."/>
            <person name="Hoelldobler B."/>
            <person name="van Ham R.C.H.J."/>
            <person name="Gross R."/>
            <person name="Moya A."/>
        </authorList>
    </citation>
    <scope>NUCLEOTIDE SEQUENCE [LARGE SCALE GENOMIC DNA]</scope>
</reference>